<dbReference type="EC" id="1.14.-.-" evidence="2"/>
<dbReference type="EMBL" id="CU928163">
    <property type="protein sequence ID" value="CAR12440.1"/>
    <property type="molecule type" value="Genomic_DNA"/>
</dbReference>
<dbReference type="RefSeq" id="WP_001305889.1">
    <property type="nucleotide sequence ID" value="NC_011751.1"/>
</dbReference>
<dbReference type="RefSeq" id="YP_002411983.1">
    <property type="nucleotide sequence ID" value="NC_011751.1"/>
</dbReference>
<dbReference type="SMR" id="B7NAT1"/>
<dbReference type="STRING" id="585056.ECUMN_1230"/>
<dbReference type="KEGG" id="eum:ECUMN_1230"/>
<dbReference type="PATRIC" id="fig|585056.7.peg.1432"/>
<dbReference type="HOGENOM" id="CLU_038878_1_1_6"/>
<dbReference type="Proteomes" id="UP000007097">
    <property type="component" value="Chromosome"/>
</dbReference>
<dbReference type="GO" id="GO:0016705">
    <property type="term" value="F:oxidoreductase activity, acting on paired donors, with incorporation or reduction of molecular oxygen"/>
    <property type="evidence" value="ECO:0007669"/>
    <property type="project" value="UniProtKB-UniRule"/>
</dbReference>
<dbReference type="GO" id="GO:0006400">
    <property type="term" value="P:tRNA modification"/>
    <property type="evidence" value="ECO:0007669"/>
    <property type="project" value="UniProtKB-UniRule"/>
</dbReference>
<dbReference type="CDD" id="cd01518">
    <property type="entry name" value="RHOD_YceA"/>
    <property type="match status" value="1"/>
</dbReference>
<dbReference type="Gene3D" id="3.30.70.100">
    <property type="match status" value="1"/>
</dbReference>
<dbReference type="Gene3D" id="3.40.250.10">
    <property type="entry name" value="Rhodanese-like domain"/>
    <property type="match status" value="1"/>
</dbReference>
<dbReference type="HAMAP" id="MF_00469">
    <property type="entry name" value="TrhO"/>
    <property type="match status" value="1"/>
</dbReference>
<dbReference type="InterPro" id="IPR001763">
    <property type="entry name" value="Rhodanese-like_dom"/>
</dbReference>
<dbReference type="InterPro" id="IPR036873">
    <property type="entry name" value="Rhodanese-like_dom_sf"/>
</dbReference>
<dbReference type="InterPro" id="IPR022111">
    <property type="entry name" value="Rhodanese_C"/>
</dbReference>
<dbReference type="InterPro" id="IPR020936">
    <property type="entry name" value="TrhO"/>
</dbReference>
<dbReference type="InterPro" id="IPR040503">
    <property type="entry name" value="TRHO_N"/>
</dbReference>
<dbReference type="NCBIfam" id="NF001133">
    <property type="entry name" value="PRK00142.1-1"/>
    <property type="match status" value="1"/>
</dbReference>
<dbReference type="PANTHER" id="PTHR43846:SF1">
    <property type="entry name" value="TRNA URIDINE(34) HYDROXYLASE"/>
    <property type="match status" value="1"/>
</dbReference>
<dbReference type="PANTHER" id="PTHR43846">
    <property type="entry name" value="UPF0176 PROTEIN YCEA"/>
    <property type="match status" value="1"/>
</dbReference>
<dbReference type="Pfam" id="PF00581">
    <property type="entry name" value="Rhodanese"/>
    <property type="match status" value="1"/>
</dbReference>
<dbReference type="Pfam" id="PF12368">
    <property type="entry name" value="Rhodanese_C"/>
    <property type="match status" value="1"/>
</dbReference>
<dbReference type="Pfam" id="PF17773">
    <property type="entry name" value="UPF0176_N"/>
    <property type="match status" value="1"/>
</dbReference>
<dbReference type="SMART" id="SM00450">
    <property type="entry name" value="RHOD"/>
    <property type="match status" value="1"/>
</dbReference>
<dbReference type="SUPFAM" id="SSF52821">
    <property type="entry name" value="Rhodanese/Cell cycle control phosphatase"/>
    <property type="match status" value="1"/>
</dbReference>
<dbReference type="PROSITE" id="PS50206">
    <property type="entry name" value="RHODANESE_3"/>
    <property type="match status" value="1"/>
</dbReference>
<keyword id="KW-0560">Oxidoreductase</keyword>
<keyword id="KW-0819">tRNA processing</keyword>
<protein>
    <recommendedName>
        <fullName evidence="2">tRNA uridine(34) hydroxylase</fullName>
        <ecNumber evidence="2">1.14.-.-</ecNumber>
    </recommendedName>
    <alternativeName>
        <fullName evidence="2">tRNA hydroxylation protein O</fullName>
    </alternativeName>
</protein>
<reference key="1">
    <citation type="journal article" date="2009" name="PLoS Genet.">
        <title>Organised genome dynamics in the Escherichia coli species results in highly diverse adaptive paths.</title>
        <authorList>
            <person name="Touchon M."/>
            <person name="Hoede C."/>
            <person name="Tenaillon O."/>
            <person name="Barbe V."/>
            <person name="Baeriswyl S."/>
            <person name="Bidet P."/>
            <person name="Bingen E."/>
            <person name="Bonacorsi S."/>
            <person name="Bouchier C."/>
            <person name="Bouvet O."/>
            <person name="Calteau A."/>
            <person name="Chiapello H."/>
            <person name="Clermont O."/>
            <person name="Cruveiller S."/>
            <person name="Danchin A."/>
            <person name="Diard M."/>
            <person name="Dossat C."/>
            <person name="Karoui M.E."/>
            <person name="Frapy E."/>
            <person name="Garry L."/>
            <person name="Ghigo J.M."/>
            <person name="Gilles A.M."/>
            <person name="Johnson J."/>
            <person name="Le Bouguenec C."/>
            <person name="Lescat M."/>
            <person name="Mangenot S."/>
            <person name="Martinez-Jehanne V."/>
            <person name="Matic I."/>
            <person name="Nassif X."/>
            <person name="Oztas S."/>
            <person name="Petit M.A."/>
            <person name="Pichon C."/>
            <person name="Rouy Z."/>
            <person name="Ruf C.S."/>
            <person name="Schneider D."/>
            <person name="Tourret J."/>
            <person name="Vacherie B."/>
            <person name="Vallenet D."/>
            <person name="Medigue C."/>
            <person name="Rocha E.P.C."/>
            <person name="Denamur E."/>
        </authorList>
    </citation>
    <scope>NUCLEOTIDE SEQUENCE [LARGE SCALE GENOMIC DNA]</scope>
    <source>
        <strain>UMN026 / ExPEC</strain>
    </source>
</reference>
<evidence type="ECO:0000250" key="1">
    <source>
        <dbReference type="UniProtKB" id="P24188"/>
    </source>
</evidence>
<evidence type="ECO:0000255" key="2">
    <source>
        <dbReference type="HAMAP-Rule" id="MF_00469"/>
    </source>
</evidence>
<gene>
    <name evidence="2" type="primary">trhO</name>
    <name type="synonym">yceA</name>
    <name type="ordered locus">ECUMN_1230</name>
</gene>
<accession>B7NAT1</accession>
<comment type="function">
    <text evidence="1">Catalyzes oxygen-dependent 5-hydroxyuridine (ho5U) modification at position 34 in tRNAs, the first step in 5-carboxymethoxyuridine (cmo5U) biosynthesis. May be part of an alternate pathway, which is able to bypass cmo5U biogenesis in a subset of tRNAs under aerobic conditions.</text>
</comment>
<comment type="catalytic activity">
    <reaction evidence="2">
        <text>uridine(34) in tRNA + AH2 + O2 = 5-hydroxyuridine(34) in tRNA + A + H2O</text>
        <dbReference type="Rhea" id="RHEA:64224"/>
        <dbReference type="Rhea" id="RHEA-COMP:11727"/>
        <dbReference type="Rhea" id="RHEA-COMP:13381"/>
        <dbReference type="ChEBI" id="CHEBI:13193"/>
        <dbReference type="ChEBI" id="CHEBI:15377"/>
        <dbReference type="ChEBI" id="CHEBI:15379"/>
        <dbReference type="ChEBI" id="CHEBI:17499"/>
        <dbReference type="ChEBI" id="CHEBI:65315"/>
        <dbReference type="ChEBI" id="CHEBI:136877"/>
    </reaction>
</comment>
<comment type="similarity">
    <text evidence="2">Belongs to the TrhO family.</text>
</comment>
<feature type="chain" id="PRO_1000200357" description="tRNA uridine(34) hydroxylase">
    <location>
        <begin position="1"/>
        <end position="350"/>
    </location>
</feature>
<feature type="domain" description="Rhodanese" evidence="2">
    <location>
        <begin position="146"/>
        <end position="240"/>
    </location>
</feature>
<feature type="active site" description="Cysteine persulfide intermediate" evidence="2">
    <location>
        <position position="200"/>
    </location>
</feature>
<proteinExistence type="inferred from homology"/>
<organism>
    <name type="scientific">Escherichia coli O17:K52:H18 (strain UMN026 / ExPEC)</name>
    <dbReference type="NCBI Taxonomy" id="585056"/>
    <lineage>
        <taxon>Bacteria</taxon>
        <taxon>Pseudomonadati</taxon>
        <taxon>Pseudomonadota</taxon>
        <taxon>Gammaproteobacteria</taxon>
        <taxon>Enterobacterales</taxon>
        <taxon>Enterobacteriaceae</taxon>
        <taxon>Escherichia</taxon>
    </lineage>
</organism>
<name>TRHO_ECOLU</name>
<sequence>MPVLHNRISNDALKAKMLAESEPRTTISFYKYFHIADPKATRDALYQLFTALDVFGRVYLAHEGINAQISVPASNVETFRAQLYAFDPALEGLRLNIALDDDGKSFWVLRMKVRDRIVADGIDDPHFDASNVGEYLQAAEVNAMLDDPDALFIDMRNHYEYEVGHFENALEIPADTFREQLPKAVEMMQAHKDKKIVMYCTGGIRCEKASAWMKHNGFNKVWHIEGGIIEYARKAREQGLPVRFIGKNFVFDERMGERISDEIIAHCHQCGAPCDSHTNCKNDGCHLLFIQCPVCAEKYKGCCSEICCEESALPPEEQRRRRAGRENGNKIFNKSRGRLNTTLGIPDPTE</sequence>